<dbReference type="EMBL" id="AL662976">
    <property type="protein sequence ID" value="CAD41206.2"/>
    <property type="molecule type" value="Genomic_DNA"/>
</dbReference>
<dbReference type="EMBL" id="AL662984">
    <property type="protein sequence ID" value="CAE03859.2"/>
    <property type="molecule type" value="Genomic_DNA"/>
</dbReference>
<dbReference type="EMBL" id="AP014960">
    <property type="status" value="NOT_ANNOTATED_CDS"/>
    <property type="molecule type" value="Genomic_DNA"/>
</dbReference>
<dbReference type="EMBL" id="AF391110">
    <property type="protein sequence ID" value="AAM73781.1"/>
    <property type="molecule type" value="Genomic_DNA"/>
</dbReference>
<dbReference type="RefSeq" id="XP_015634509.1">
    <property type="nucleotide sequence ID" value="XM_015779023.1"/>
</dbReference>
<dbReference type="SMR" id="Q7X6J9"/>
<dbReference type="FunCoup" id="Q7X6J9">
    <property type="interactions" value="73"/>
</dbReference>
<dbReference type="STRING" id="39947.Q7X6J9"/>
<dbReference type="PaxDb" id="39947-Q7X6J9"/>
<dbReference type="eggNOG" id="ENOG502QPVQ">
    <property type="taxonomic scope" value="Eukaryota"/>
</dbReference>
<dbReference type="InParanoid" id="Q7X6J9"/>
<dbReference type="OrthoDB" id="406505at2759"/>
<dbReference type="Proteomes" id="UP000000763">
    <property type="component" value="Chromosome 4"/>
</dbReference>
<dbReference type="Proteomes" id="UP000059680">
    <property type="component" value="Chromosome 4"/>
</dbReference>
<dbReference type="GO" id="GO:0005576">
    <property type="term" value="C:extracellular region"/>
    <property type="evidence" value="ECO:0007669"/>
    <property type="project" value="UniProtKB-KW"/>
</dbReference>
<dbReference type="GO" id="GO:0016020">
    <property type="term" value="C:membrane"/>
    <property type="evidence" value="ECO:0007669"/>
    <property type="project" value="UniProtKB-SubCell"/>
</dbReference>
<dbReference type="GO" id="GO:0009828">
    <property type="term" value="P:plant-type cell wall loosening"/>
    <property type="evidence" value="ECO:0000250"/>
    <property type="project" value="UniProtKB"/>
</dbReference>
<dbReference type="GO" id="GO:0019953">
    <property type="term" value="P:sexual reproduction"/>
    <property type="evidence" value="ECO:0007669"/>
    <property type="project" value="InterPro"/>
</dbReference>
<dbReference type="GO" id="GO:0006949">
    <property type="term" value="P:syncytium formation"/>
    <property type="evidence" value="ECO:0000318"/>
    <property type="project" value="GO_Central"/>
</dbReference>
<dbReference type="CDD" id="cd22275">
    <property type="entry name" value="DPBB_EXPB_N"/>
    <property type="match status" value="1"/>
</dbReference>
<dbReference type="FunFam" id="2.60.40.760:FF:000002">
    <property type="entry name" value="Beta-expansin 3"/>
    <property type="match status" value="1"/>
</dbReference>
<dbReference type="FunFam" id="2.40.40.10:FF:000004">
    <property type="entry name" value="Expansin B3"/>
    <property type="match status" value="1"/>
</dbReference>
<dbReference type="Gene3D" id="2.60.40.760">
    <property type="entry name" value="Expansin, cellulose-binding-like domain"/>
    <property type="match status" value="1"/>
</dbReference>
<dbReference type="Gene3D" id="2.40.40.10">
    <property type="entry name" value="RlpA-like domain"/>
    <property type="match status" value="1"/>
</dbReference>
<dbReference type="InterPro" id="IPR007118">
    <property type="entry name" value="Expan_Lol_pI"/>
</dbReference>
<dbReference type="InterPro" id="IPR007112">
    <property type="entry name" value="Expansin/allergen_DPBB_dom"/>
</dbReference>
<dbReference type="InterPro" id="IPR007117">
    <property type="entry name" value="Expansin_CBD"/>
</dbReference>
<dbReference type="InterPro" id="IPR036749">
    <property type="entry name" value="Expansin_CBD_sf"/>
</dbReference>
<dbReference type="InterPro" id="IPR005795">
    <property type="entry name" value="LolPI"/>
</dbReference>
<dbReference type="InterPro" id="IPR009009">
    <property type="entry name" value="RlpA-like_DPBB"/>
</dbReference>
<dbReference type="InterPro" id="IPR036908">
    <property type="entry name" value="RlpA-like_sf"/>
</dbReference>
<dbReference type="PANTHER" id="PTHR31692:SF82">
    <property type="entry name" value="EXPANSIN-B17"/>
    <property type="match status" value="1"/>
</dbReference>
<dbReference type="PANTHER" id="PTHR31692">
    <property type="entry name" value="EXPANSIN-B3"/>
    <property type="match status" value="1"/>
</dbReference>
<dbReference type="Pfam" id="PF03330">
    <property type="entry name" value="DPBB_1"/>
    <property type="match status" value="1"/>
</dbReference>
<dbReference type="Pfam" id="PF01357">
    <property type="entry name" value="Expansin_C"/>
    <property type="match status" value="1"/>
</dbReference>
<dbReference type="PRINTS" id="PR01225">
    <property type="entry name" value="EXPANSNFAMLY"/>
</dbReference>
<dbReference type="PRINTS" id="PR00829">
    <property type="entry name" value="LOLP1ALLERGN"/>
</dbReference>
<dbReference type="SMART" id="SM00837">
    <property type="entry name" value="DPBB_1"/>
    <property type="match status" value="1"/>
</dbReference>
<dbReference type="SUPFAM" id="SSF50685">
    <property type="entry name" value="Barwin-like endoglucanases"/>
    <property type="match status" value="1"/>
</dbReference>
<dbReference type="SUPFAM" id="SSF49590">
    <property type="entry name" value="PHL pollen allergen"/>
    <property type="match status" value="1"/>
</dbReference>
<dbReference type="PROSITE" id="PS50843">
    <property type="entry name" value="EXPANSIN_CBD"/>
    <property type="match status" value="1"/>
</dbReference>
<dbReference type="PROSITE" id="PS50842">
    <property type="entry name" value="EXPANSIN_EG45"/>
    <property type="match status" value="1"/>
</dbReference>
<sequence length="278" mass="29529">MAAASSRSFSLCVLLLLLLLAPPISASFLFDGGKSKSAAAAAAVDMEWRPATATWYGDAEGDGSTGGACGYGSLVDVVPMKARVGSVSPVLFKDGEGCGACYKVKCLDHGICSRRAVTVIVTDECPGGLCAFGRTHFDLSGAAFSRMAVAGAGGHLRDRGQLSVVYRRTACKYGGKNIAFRVNEGSTNFWLSLLVEFEDGQGDIGSMQIKQANSVEWLDMKHVWGATWCLVRGPLVGPFSVRLTTLSAQKALTARDVIPRNWKPTATYTSRLNFEAAL</sequence>
<feature type="signal peptide" evidence="2">
    <location>
        <begin position="1"/>
        <end position="26"/>
    </location>
</feature>
<feature type="chain" id="PRO_0000252027" description="Expansin-B17">
    <location>
        <begin position="27"/>
        <end position="278"/>
    </location>
</feature>
<feature type="domain" description="Expansin-like EG45" evidence="4">
    <location>
        <begin position="66"/>
        <end position="176"/>
    </location>
</feature>
<feature type="domain" description="Expansin-like CBD" evidence="3">
    <location>
        <begin position="189"/>
        <end position="270"/>
    </location>
</feature>
<feature type="disulfide bond" evidence="4">
    <location>
        <begin position="69"/>
        <end position="98"/>
    </location>
</feature>
<feature type="disulfide bond" evidence="4">
    <location>
        <begin position="101"/>
        <end position="171"/>
    </location>
</feature>
<feature type="disulfide bond" evidence="4">
    <location>
        <begin position="106"/>
        <end position="112"/>
    </location>
</feature>
<reference key="1">
    <citation type="journal article" date="2002" name="Nature">
        <title>Sequence and analysis of rice chromosome 4.</title>
        <authorList>
            <person name="Feng Q."/>
            <person name="Zhang Y."/>
            <person name="Hao P."/>
            <person name="Wang S."/>
            <person name="Fu G."/>
            <person name="Huang Y."/>
            <person name="Li Y."/>
            <person name="Zhu J."/>
            <person name="Liu Y."/>
            <person name="Hu X."/>
            <person name="Jia P."/>
            <person name="Zhang Y."/>
            <person name="Zhao Q."/>
            <person name="Ying K."/>
            <person name="Yu S."/>
            <person name="Tang Y."/>
            <person name="Weng Q."/>
            <person name="Zhang L."/>
            <person name="Lu Y."/>
            <person name="Mu J."/>
            <person name="Lu Y."/>
            <person name="Zhang L.S."/>
            <person name="Yu Z."/>
            <person name="Fan D."/>
            <person name="Liu X."/>
            <person name="Lu T."/>
            <person name="Li C."/>
            <person name="Wu Y."/>
            <person name="Sun T."/>
            <person name="Lei H."/>
            <person name="Li T."/>
            <person name="Hu H."/>
            <person name="Guan J."/>
            <person name="Wu M."/>
            <person name="Zhang R."/>
            <person name="Zhou B."/>
            <person name="Chen Z."/>
            <person name="Chen L."/>
            <person name="Jin Z."/>
            <person name="Wang R."/>
            <person name="Yin H."/>
            <person name="Cai Z."/>
            <person name="Ren S."/>
            <person name="Lv G."/>
            <person name="Gu W."/>
            <person name="Zhu G."/>
            <person name="Tu Y."/>
            <person name="Jia J."/>
            <person name="Zhang Y."/>
            <person name="Chen J."/>
            <person name="Kang H."/>
            <person name="Chen X."/>
            <person name="Shao C."/>
            <person name="Sun Y."/>
            <person name="Hu Q."/>
            <person name="Zhang X."/>
            <person name="Zhang W."/>
            <person name="Wang L."/>
            <person name="Ding C."/>
            <person name="Sheng H."/>
            <person name="Gu J."/>
            <person name="Chen S."/>
            <person name="Ni L."/>
            <person name="Zhu F."/>
            <person name="Chen W."/>
            <person name="Lan L."/>
            <person name="Lai Y."/>
            <person name="Cheng Z."/>
            <person name="Gu M."/>
            <person name="Jiang J."/>
            <person name="Li J."/>
            <person name="Hong G."/>
            <person name="Xue Y."/>
            <person name="Han B."/>
        </authorList>
    </citation>
    <scope>NUCLEOTIDE SEQUENCE [LARGE SCALE GENOMIC DNA]</scope>
    <source>
        <strain>cv. Nipponbare</strain>
    </source>
</reference>
<reference key="2">
    <citation type="journal article" date="2005" name="Nature">
        <title>The map-based sequence of the rice genome.</title>
        <authorList>
            <consortium name="International rice genome sequencing project (IRGSP)"/>
        </authorList>
    </citation>
    <scope>NUCLEOTIDE SEQUENCE [LARGE SCALE GENOMIC DNA]</scope>
    <source>
        <strain>cv. Nipponbare</strain>
    </source>
</reference>
<reference key="3">
    <citation type="journal article" date="2013" name="Rice">
        <title>Improvement of the Oryza sativa Nipponbare reference genome using next generation sequence and optical map data.</title>
        <authorList>
            <person name="Kawahara Y."/>
            <person name="de la Bastide M."/>
            <person name="Hamilton J.P."/>
            <person name="Kanamori H."/>
            <person name="McCombie W.R."/>
            <person name="Ouyang S."/>
            <person name="Schwartz D.C."/>
            <person name="Tanaka T."/>
            <person name="Wu J."/>
            <person name="Zhou S."/>
            <person name="Childs K.L."/>
            <person name="Davidson R.M."/>
            <person name="Lin H."/>
            <person name="Quesada-Ocampo L."/>
            <person name="Vaillancourt B."/>
            <person name="Sakai H."/>
            <person name="Lee S.S."/>
            <person name="Kim J."/>
            <person name="Numa H."/>
            <person name="Itoh T."/>
            <person name="Buell C.R."/>
            <person name="Matsumoto T."/>
        </authorList>
    </citation>
    <scope>GENOME REANNOTATION</scope>
    <source>
        <strain>cv. Nipponbare</strain>
    </source>
</reference>
<reference key="4">
    <citation type="journal article" date="2001" name="Plant Physiol.">
        <title>Expression of beta-expansins is correlated with internodal elongation in deepwater rice.</title>
        <authorList>
            <person name="Lee Y."/>
            <person name="Kende H."/>
        </authorList>
    </citation>
    <scope>NUCLEOTIDE SEQUENCE [GENOMIC DNA] OF 1-211</scope>
</reference>
<reference key="5">
    <citation type="journal article" date="2004" name="Plant Mol. Biol.">
        <title>Nomenclature for members of the expansin superfamily of genes and proteins.</title>
        <authorList>
            <person name="Kende H."/>
            <person name="Bradford K.J."/>
            <person name="Brummell D.A."/>
            <person name="Cho H.-T."/>
            <person name="Cosgrove D.J."/>
            <person name="Fleming A.J."/>
            <person name="Gehring C."/>
            <person name="Lee Y."/>
            <person name="McQueen-Mason S.J."/>
            <person name="Rose J.K.C."/>
            <person name="Voesenek L.A.C."/>
        </authorList>
    </citation>
    <scope>NOMENCLATURE</scope>
</reference>
<gene>
    <name type="primary">EXPB17</name>
    <name type="ordered locus">Os04g0530100</name>
    <name type="ordered locus">LOC_Os04g44780</name>
    <name type="ORF">OSJNBa0074L08.17</name>
    <name type="ORF">OSJNBa0081C01.5</name>
</gene>
<accession>Q7X6J9</accession>
<accession>Q8LLL9</accession>
<evidence type="ECO:0000250" key="1"/>
<evidence type="ECO:0000255" key="2"/>
<evidence type="ECO:0000255" key="3">
    <source>
        <dbReference type="PROSITE-ProRule" id="PRU00078"/>
    </source>
</evidence>
<evidence type="ECO:0000255" key="4">
    <source>
        <dbReference type="PROSITE-ProRule" id="PRU00079"/>
    </source>
</evidence>
<evidence type="ECO:0000305" key="5"/>
<organism>
    <name type="scientific">Oryza sativa subsp. japonica</name>
    <name type="common">Rice</name>
    <dbReference type="NCBI Taxonomy" id="39947"/>
    <lineage>
        <taxon>Eukaryota</taxon>
        <taxon>Viridiplantae</taxon>
        <taxon>Streptophyta</taxon>
        <taxon>Embryophyta</taxon>
        <taxon>Tracheophyta</taxon>
        <taxon>Spermatophyta</taxon>
        <taxon>Magnoliopsida</taxon>
        <taxon>Liliopsida</taxon>
        <taxon>Poales</taxon>
        <taxon>Poaceae</taxon>
        <taxon>BOP clade</taxon>
        <taxon>Oryzoideae</taxon>
        <taxon>Oryzeae</taxon>
        <taxon>Oryzinae</taxon>
        <taxon>Oryza</taxon>
        <taxon>Oryza sativa</taxon>
    </lineage>
</organism>
<keyword id="KW-0134">Cell wall</keyword>
<keyword id="KW-0961">Cell wall biogenesis/degradation</keyword>
<keyword id="KW-1015">Disulfide bond</keyword>
<keyword id="KW-0472">Membrane</keyword>
<keyword id="KW-1185">Reference proteome</keyword>
<keyword id="KW-0964">Secreted</keyword>
<keyword id="KW-0732">Signal</keyword>
<proteinExistence type="inferred from homology"/>
<protein>
    <recommendedName>
        <fullName>Expansin-B17</fullName>
    </recommendedName>
    <alternativeName>
        <fullName>Beta-expansin-17</fullName>
    </alternativeName>
    <alternativeName>
        <fullName>OsEXPB17</fullName>
    </alternativeName>
    <alternativeName>
        <fullName>OsaEXPb1.13</fullName>
    </alternativeName>
</protein>
<comment type="function">
    <text evidence="1">May cause loosening and extension of plant cell walls by disrupting non-covalent bonding between cellulose microfibrils and matrix glucans. No enzymatic activity has been found. May be required for rapid internodal elongation in deepwater rice during submergence (By similarity).</text>
</comment>
<comment type="subcellular location">
    <subcellularLocation>
        <location evidence="1">Secreted</location>
        <location evidence="1">Cell wall</location>
    </subcellularLocation>
    <subcellularLocation>
        <location evidence="1">Membrane</location>
        <topology evidence="1">Peripheral membrane protein</topology>
    </subcellularLocation>
</comment>
<comment type="similarity">
    <text evidence="5">Belongs to the expansin family. Expansin B subfamily.</text>
</comment>
<comment type="online information" name="EXPANSIN homepage">
    <link uri="https://www.dept.psu.edu/biology/groups/expansins/index.htm"/>
</comment>
<name>EXB17_ORYSJ</name>